<gene>
    <name type="primary">SERPINA6</name>
    <name type="synonym">CBG</name>
</gene>
<protein>
    <recommendedName>
        <fullName>Corticosteroid-binding globulin</fullName>
        <shortName>CBG</shortName>
    </recommendedName>
    <alternativeName>
        <fullName>Serpin A6</fullName>
    </alternativeName>
    <alternativeName>
        <fullName>Transcortin</fullName>
    </alternativeName>
</protein>
<keyword id="KW-0325">Glycoprotein</keyword>
<keyword id="KW-0446">Lipid-binding</keyword>
<keyword id="KW-0964">Secreted</keyword>
<keyword id="KW-0732">Signal</keyword>
<keyword id="KW-0754">Steroid-binding</keyword>
<keyword id="KW-0813">Transport</keyword>
<reference key="1">
    <citation type="journal article" date="1994" name="Endocrinology">
        <title>Squirrel monkey corticosteroid-binding globulin: primary structure and comparison with the human protein.</title>
        <authorList>
            <person name="Hammond G.L."/>
            <person name="Smith C.L."/>
            <person name="Lahteenmaki P."/>
            <person name="Grolla A."/>
            <person name="Warmels-Rodenhiser S."/>
            <person name="Hodgert H."/>
            <person name="Murai J.T."/>
            <person name="Siiteri P.K."/>
        </authorList>
    </citation>
    <scope>NUCLEOTIDE SEQUENCE [MRNA]</scope>
    <source>
        <tissue>Liver</tissue>
    </source>
</reference>
<comment type="function">
    <text>Major transport protein for glucocorticoids and progestins in the blood of almost all vertebrate species.</text>
</comment>
<comment type="subcellular location">
    <subcellularLocation>
        <location>Secreted</location>
    </subcellularLocation>
</comment>
<comment type="tissue specificity">
    <text>Expressed by the liver; secreted in plasma.</text>
</comment>
<comment type="domain">
    <text evidence="1">Proteolytic cleavage leads to an important conformation change. This reduces the affinity for steroids (By similarity).</text>
</comment>
<comment type="similarity">
    <text evidence="3">Belongs to the serpin family.</text>
</comment>
<name>CBG_SAISC</name>
<sequence length="406" mass="45358">MPLLLYTCLLWLLSSGLWTVQAMDPNAAYMNTSRHHRVLASVNADFAFSLYKHLVALSPKKNVFISPVSISMALAMLSLGTCGHTRAQLLHGLGFNLTEKSEAEIHQSFQHLHQLLAESDSSLEMTLGNALFLDGSLELLESFSADIKHYYESEVLTLNFQDWATTASRQINGYVKSKTQGKIDDLFSGLNSPAVLILINYIFFKGTWKQPFDLASTREENFYVDETTVVKVPMMFQSGTIRYLHDSELPCQLVQLNYAGNGTVFFILPEKGKMNIVITALSRNTIDRWSAGLTRSQVDLYIPKVTISGAYDFGGVLEDMGIADLFTNHANFSRITQDAQLKLSKVFHKAVLQLSEEGVNTTGSTGVTLNPMSKPIIMRFNQPFLIMVFDHFTWSSLFLGRVVNPA</sequence>
<organism>
    <name type="scientific">Saimiri sciureus</name>
    <name type="common">Common squirrel monkey</name>
    <dbReference type="NCBI Taxonomy" id="9521"/>
    <lineage>
        <taxon>Eukaryota</taxon>
        <taxon>Metazoa</taxon>
        <taxon>Chordata</taxon>
        <taxon>Craniata</taxon>
        <taxon>Vertebrata</taxon>
        <taxon>Euteleostomi</taxon>
        <taxon>Mammalia</taxon>
        <taxon>Eutheria</taxon>
        <taxon>Euarchontoglires</taxon>
        <taxon>Primates</taxon>
        <taxon>Haplorrhini</taxon>
        <taxon>Platyrrhini</taxon>
        <taxon>Cebidae</taxon>
        <taxon>Saimiriinae</taxon>
        <taxon>Saimiri</taxon>
    </lineage>
</organism>
<feature type="signal peptide" evidence="1">
    <location>
        <begin position="1"/>
        <end position="22"/>
    </location>
</feature>
<feature type="chain" id="PRO_0000032433" description="Corticosteroid-binding globulin">
    <location>
        <begin position="23"/>
        <end position="406"/>
    </location>
</feature>
<feature type="binding site" evidence="1">
    <location>
        <position position="255"/>
    </location>
    <ligand>
        <name>cortisol</name>
        <dbReference type="ChEBI" id="CHEBI:17650"/>
    </ligand>
</feature>
<feature type="binding site" evidence="1">
    <location>
        <position position="287"/>
    </location>
    <ligand>
        <name>cortisol</name>
        <dbReference type="ChEBI" id="CHEBI:17650"/>
    </ligand>
</feature>
<feature type="binding site" evidence="1">
    <location>
        <position position="394"/>
    </location>
    <ligand>
        <name>cortisol</name>
        <dbReference type="ChEBI" id="CHEBI:17650"/>
    </ligand>
</feature>
<feature type="site" description="Conserved cysteine within steroid binding domain">
    <location>
        <position position="251"/>
    </location>
</feature>
<feature type="glycosylation site" description="N-linked (GlcNAc...) asparagine" evidence="2">
    <location>
        <position position="31"/>
    </location>
</feature>
<feature type="glycosylation site" description="N-linked (GlcNAc...) asparagine" evidence="2">
    <location>
        <position position="96"/>
    </location>
</feature>
<feature type="glycosylation site" description="N-linked (GlcNAc...) asparagine" evidence="2">
    <location>
        <position position="261"/>
    </location>
</feature>
<feature type="glycosylation site" description="N-linked (GlcNAc...) asparagine" evidence="2">
    <location>
        <position position="331"/>
    </location>
</feature>
<feature type="glycosylation site" description="N-linked (GlcNAc...) asparagine" evidence="2">
    <location>
        <position position="360"/>
    </location>
</feature>
<dbReference type="EMBL" id="S68757">
    <property type="protein sequence ID" value="AAC60614.1"/>
    <property type="molecule type" value="mRNA"/>
</dbReference>
<dbReference type="PIR" id="I53281">
    <property type="entry name" value="I53281"/>
</dbReference>
<dbReference type="SMR" id="P50451"/>
<dbReference type="MEROPS" id="I04.954"/>
<dbReference type="GlyCosmos" id="P50451">
    <property type="glycosylation" value="5 sites, No reported glycans"/>
</dbReference>
<dbReference type="GO" id="GO:0005615">
    <property type="term" value="C:extracellular space"/>
    <property type="evidence" value="ECO:0007669"/>
    <property type="project" value="InterPro"/>
</dbReference>
<dbReference type="GO" id="GO:0004867">
    <property type="term" value="F:serine-type endopeptidase inhibitor activity"/>
    <property type="evidence" value="ECO:0007669"/>
    <property type="project" value="InterPro"/>
</dbReference>
<dbReference type="GO" id="GO:0005496">
    <property type="term" value="F:steroid binding"/>
    <property type="evidence" value="ECO:0000250"/>
    <property type="project" value="UniProtKB"/>
</dbReference>
<dbReference type="CDD" id="cd19554">
    <property type="entry name" value="serpinA6_CBG"/>
    <property type="match status" value="1"/>
</dbReference>
<dbReference type="FunFam" id="3.30.497.10:FF:000001">
    <property type="entry name" value="Serine protease inhibitor"/>
    <property type="match status" value="1"/>
</dbReference>
<dbReference type="FunFam" id="2.30.39.10:FF:000002">
    <property type="entry name" value="Serpin family D member 1"/>
    <property type="match status" value="1"/>
</dbReference>
<dbReference type="Gene3D" id="2.30.39.10">
    <property type="entry name" value="Alpha-1-antitrypsin, domain 1"/>
    <property type="match status" value="1"/>
</dbReference>
<dbReference type="Gene3D" id="3.30.497.10">
    <property type="entry name" value="Antithrombin, subunit I, domain 2"/>
    <property type="match status" value="1"/>
</dbReference>
<dbReference type="InterPro" id="IPR023795">
    <property type="entry name" value="Serpin_CS"/>
</dbReference>
<dbReference type="InterPro" id="IPR023796">
    <property type="entry name" value="Serpin_dom"/>
</dbReference>
<dbReference type="InterPro" id="IPR000215">
    <property type="entry name" value="Serpin_fam"/>
</dbReference>
<dbReference type="InterPro" id="IPR036186">
    <property type="entry name" value="Serpin_sf"/>
</dbReference>
<dbReference type="InterPro" id="IPR042178">
    <property type="entry name" value="Serpin_sf_1"/>
</dbReference>
<dbReference type="InterPro" id="IPR042185">
    <property type="entry name" value="Serpin_sf_2"/>
</dbReference>
<dbReference type="PANTHER" id="PTHR11461:SF34">
    <property type="entry name" value="CORTICOSTEROID-BINDING GLOBULIN"/>
    <property type="match status" value="1"/>
</dbReference>
<dbReference type="PANTHER" id="PTHR11461">
    <property type="entry name" value="SERINE PROTEASE INHIBITOR, SERPIN"/>
    <property type="match status" value="1"/>
</dbReference>
<dbReference type="Pfam" id="PF00079">
    <property type="entry name" value="Serpin"/>
    <property type="match status" value="1"/>
</dbReference>
<dbReference type="PRINTS" id="PR00780">
    <property type="entry name" value="LEUSERPINII"/>
</dbReference>
<dbReference type="SMART" id="SM00093">
    <property type="entry name" value="SERPIN"/>
    <property type="match status" value="1"/>
</dbReference>
<dbReference type="SUPFAM" id="SSF56574">
    <property type="entry name" value="Serpins"/>
    <property type="match status" value="1"/>
</dbReference>
<dbReference type="PROSITE" id="PS00284">
    <property type="entry name" value="SERPIN"/>
    <property type="match status" value="1"/>
</dbReference>
<accession>P50451</accession>
<evidence type="ECO:0000250" key="1"/>
<evidence type="ECO:0000255" key="2"/>
<evidence type="ECO:0000305" key="3"/>
<proteinExistence type="evidence at transcript level"/>